<feature type="chain" id="PRO_0000267761" description="3-hydroxydecanoyl-[acyl-carrier-protein] dehydratase">
    <location>
        <begin position="1"/>
        <end position="171"/>
    </location>
</feature>
<feature type="active site" evidence="1">
    <location>
        <position position="70"/>
    </location>
</feature>
<proteinExistence type="inferred from homology"/>
<evidence type="ECO:0000255" key="1">
    <source>
        <dbReference type="HAMAP-Rule" id="MF_00405"/>
    </source>
</evidence>
<keyword id="KW-0963">Cytoplasm</keyword>
<keyword id="KW-0275">Fatty acid biosynthesis</keyword>
<keyword id="KW-0276">Fatty acid metabolism</keyword>
<keyword id="KW-0413">Isomerase</keyword>
<keyword id="KW-0444">Lipid biosynthesis</keyword>
<keyword id="KW-0443">Lipid metabolism</keyword>
<keyword id="KW-0456">Lyase</keyword>
<name>FABA_XANE5</name>
<accession>Q3BP41</accession>
<dbReference type="EC" id="4.2.1.59" evidence="1"/>
<dbReference type="EC" id="5.3.3.14" evidence="1"/>
<dbReference type="EMBL" id="AM039952">
    <property type="protein sequence ID" value="CAJ25472.1"/>
    <property type="molecule type" value="Genomic_DNA"/>
</dbReference>
<dbReference type="RefSeq" id="WP_011348636.1">
    <property type="nucleotide sequence ID" value="NZ_CP017190.1"/>
</dbReference>
<dbReference type="SMR" id="Q3BP41"/>
<dbReference type="STRING" id="456327.BJD11_03955"/>
<dbReference type="GeneID" id="63992766"/>
<dbReference type="KEGG" id="xcv:XCV3741"/>
<dbReference type="eggNOG" id="COG0764">
    <property type="taxonomic scope" value="Bacteria"/>
</dbReference>
<dbReference type="HOGENOM" id="CLU_097925_0_0_6"/>
<dbReference type="UniPathway" id="UPA00094"/>
<dbReference type="Proteomes" id="UP000007069">
    <property type="component" value="Chromosome"/>
</dbReference>
<dbReference type="GO" id="GO:0005737">
    <property type="term" value="C:cytoplasm"/>
    <property type="evidence" value="ECO:0007669"/>
    <property type="project" value="UniProtKB-SubCell"/>
</dbReference>
<dbReference type="GO" id="GO:0019171">
    <property type="term" value="F:(3R)-hydroxyacyl-[acyl-carrier-protein] dehydratase activity"/>
    <property type="evidence" value="ECO:0007669"/>
    <property type="project" value="UniProtKB-UniRule"/>
</dbReference>
<dbReference type="GO" id="GO:0034017">
    <property type="term" value="F:trans-2-decenoyl-acyl-carrier-protein isomerase activity"/>
    <property type="evidence" value="ECO:0007669"/>
    <property type="project" value="UniProtKB-UniRule"/>
</dbReference>
<dbReference type="GO" id="GO:0006636">
    <property type="term" value="P:unsaturated fatty acid biosynthetic process"/>
    <property type="evidence" value="ECO:0007669"/>
    <property type="project" value="UniProtKB-UniRule"/>
</dbReference>
<dbReference type="CDD" id="cd01287">
    <property type="entry name" value="FabA"/>
    <property type="match status" value="1"/>
</dbReference>
<dbReference type="Gene3D" id="3.10.129.10">
    <property type="entry name" value="Hotdog Thioesterase"/>
    <property type="match status" value="1"/>
</dbReference>
<dbReference type="HAMAP" id="MF_00405">
    <property type="entry name" value="FabA"/>
    <property type="match status" value="1"/>
</dbReference>
<dbReference type="InterPro" id="IPR010083">
    <property type="entry name" value="FabA"/>
</dbReference>
<dbReference type="InterPro" id="IPR013114">
    <property type="entry name" value="FabA_FabZ"/>
</dbReference>
<dbReference type="InterPro" id="IPR029069">
    <property type="entry name" value="HotDog_dom_sf"/>
</dbReference>
<dbReference type="NCBIfam" id="TIGR01749">
    <property type="entry name" value="fabA"/>
    <property type="match status" value="1"/>
</dbReference>
<dbReference type="NCBIfam" id="NF003509">
    <property type="entry name" value="PRK05174.1"/>
    <property type="match status" value="1"/>
</dbReference>
<dbReference type="PANTHER" id="PTHR30272">
    <property type="entry name" value="3-HYDROXYACYL-[ACYL-CARRIER-PROTEIN] DEHYDRATASE"/>
    <property type="match status" value="1"/>
</dbReference>
<dbReference type="PANTHER" id="PTHR30272:SF8">
    <property type="entry name" value="3-HYDROXYDECANOYL-[ACYL-CARRIER-PROTEIN] DEHYDRATASE"/>
    <property type="match status" value="1"/>
</dbReference>
<dbReference type="Pfam" id="PF07977">
    <property type="entry name" value="FabA"/>
    <property type="match status" value="1"/>
</dbReference>
<dbReference type="SUPFAM" id="SSF54637">
    <property type="entry name" value="Thioesterase/thiol ester dehydrase-isomerase"/>
    <property type="match status" value="1"/>
</dbReference>
<protein>
    <recommendedName>
        <fullName evidence="1">3-hydroxydecanoyl-[acyl-carrier-protein] dehydratase</fullName>
        <ecNumber evidence="1">4.2.1.59</ecNumber>
    </recommendedName>
    <alternativeName>
        <fullName evidence="1">3-hydroxyacyl-[acyl-carrier-protein] dehydratase FabA</fullName>
    </alternativeName>
    <alternativeName>
        <fullName evidence="1">Beta-hydroxydecanoyl thioester dehydrase</fullName>
    </alternativeName>
    <alternativeName>
        <fullName evidence="1">Trans-2-decenoyl-[acyl-carrier-protein] isomerase</fullName>
        <ecNumber evidence="1">5.3.3.14</ecNumber>
    </alternativeName>
</protein>
<sequence>MTRQSTYSRDQLLASARGELFAPDSGRLPNDPMLMFDRITEISDAGGTHGKGLIRAELDIRPDLWFFGCHFIGDPVMPGCLGLDAMWQLTGFFLTWIGAPGRGRALGCGEVKFTGQVLPSARLVRYEVDVSRVINRKLVMAQTDARMLVDGREIYTAKDLRVGMFTSTENF</sequence>
<gene>
    <name evidence="1" type="primary">fabA</name>
    <name type="ordered locus">XCV3741</name>
</gene>
<reference key="1">
    <citation type="journal article" date="2005" name="J. Bacteriol.">
        <title>Insights into genome plasticity and pathogenicity of the plant pathogenic Bacterium Xanthomonas campestris pv. vesicatoria revealed by the complete genome sequence.</title>
        <authorList>
            <person name="Thieme F."/>
            <person name="Koebnik R."/>
            <person name="Bekel T."/>
            <person name="Berger C."/>
            <person name="Boch J."/>
            <person name="Buettner D."/>
            <person name="Caldana C."/>
            <person name="Gaigalat L."/>
            <person name="Goesmann A."/>
            <person name="Kay S."/>
            <person name="Kirchner O."/>
            <person name="Lanz C."/>
            <person name="Linke B."/>
            <person name="McHardy A.C."/>
            <person name="Meyer F."/>
            <person name="Mittenhuber G."/>
            <person name="Nies D.H."/>
            <person name="Niesbach-Kloesgen U."/>
            <person name="Patschkowski T."/>
            <person name="Rueckert C."/>
            <person name="Rupp O."/>
            <person name="Schneiker S."/>
            <person name="Schuster S.C."/>
            <person name="Vorhoelter F.J."/>
            <person name="Weber E."/>
            <person name="Puehler A."/>
            <person name="Bonas U."/>
            <person name="Bartels D."/>
            <person name="Kaiser O."/>
        </authorList>
    </citation>
    <scope>NUCLEOTIDE SEQUENCE [LARGE SCALE GENOMIC DNA]</scope>
    <source>
        <strain>85-10</strain>
    </source>
</reference>
<organism>
    <name type="scientific">Xanthomonas euvesicatoria pv. vesicatoria (strain 85-10)</name>
    <name type="common">Xanthomonas campestris pv. vesicatoria</name>
    <dbReference type="NCBI Taxonomy" id="316273"/>
    <lineage>
        <taxon>Bacteria</taxon>
        <taxon>Pseudomonadati</taxon>
        <taxon>Pseudomonadota</taxon>
        <taxon>Gammaproteobacteria</taxon>
        <taxon>Lysobacterales</taxon>
        <taxon>Lysobacteraceae</taxon>
        <taxon>Xanthomonas</taxon>
    </lineage>
</organism>
<comment type="function">
    <text evidence="1">Necessary for the introduction of cis unsaturation into fatty acids. Catalyzes the dehydration of (3R)-3-hydroxydecanoyl-ACP to E-(2)-decenoyl-ACP and then its isomerization to Z-(3)-decenoyl-ACP. Can catalyze the dehydratase reaction for beta-hydroxyacyl-ACPs with saturated chain lengths up to 16:0, being most active on intermediate chain length.</text>
</comment>
<comment type="catalytic activity">
    <reaction evidence="1">
        <text>a (3R)-hydroxyacyl-[ACP] = a (2E)-enoyl-[ACP] + H2O</text>
        <dbReference type="Rhea" id="RHEA:13097"/>
        <dbReference type="Rhea" id="RHEA-COMP:9925"/>
        <dbReference type="Rhea" id="RHEA-COMP:9945"/>
        <dbReference type="ChEBI" id="CHEBI:15377"/>
        <dbReference type="ChEBI" id="CHEBI:78784"/>
        <dbReference type="ChEBI" id="CHEBI:78827"/>
        <dbReference type="EC" id="4.2.1.59"/>
    </reaction>
</comment>
<comment type="catalytic activity">
    <reaction evidence="1">
        <text>(3R)-hydroxydecanoyl-[ACP] = (2E)-decenoyl-[ACP] + H2O</text>
        <dbReference type="Rhea" id="RHEA:41860"/>
        <dbReference type="Rhea" id="RHEA-COMP:9638"/>
        <dbReference type="Rhea" id="RHEA-COMP:9639"/>
        <dbReference type="ChEBI" id="CHEBI:15377"/>
        <dbReference type="ChEBI" id="CHEBI:78466"/>
        <dbReference type="ChEBI" id="CHEBI:78467"/>
    </reaction>
</comment>
<comment type="catalytic activity">
    <reaction evidence="1">
        <text>(2E)-decenoyl-[ACP] = (3Z)-decenoyl-[ACP]</text>
        <dbReference type="Rhea" id="RHEA:23568"/>
        <dbReference type="Rhea" id="RHEA-COMP:9639"/>
        <dbReference type="Rhea" id="RHEA-COMP:9927"/>
        <dbReference type="ChEBI" id="CHEBI:78467"/>
        <dbReference type="ChEBI" id="CHEBI:78798"/>
        <dbReference type="EC" id="5.3.3.14"/>
    </reaction>
</comment>
<comment type="pathway">
    <text evidence="1">Lipid metabolism; fatty acid biosynthesis.</text>
</comment>
<comment type="subunit">
    <text evidence="1">Homodimer.</text>
</comment>
<comment type="subcellular location">
    <subcellularLocation>
        <location evidence="1">Cytoplasm</location>
    </subcellularLocation>
</comment>
<comment type="similarity">
    <text evidence="1">Belongs to the thioester dehydratase family. FabA subfamily.</text>
</comment>